<comment type="function">
    <text evidence="1">Catalyzes the NADPH-dependent reduction of glutamyl-tRNA(Glu) to glutamate 1-semialdehyde (GSA).</text>
</comment>
<comment type="catalytic activity">
    <reaction evidence="1">
        <text>(S)-4-amino-5-oxopentanoate + tRNA(Glu) + NADP(+) = L-glutamyl-tRNA(Glu) + NADPH + H(+)</text>
        <dbReference type="Rhea" id="RHEA:12344"/>
        <dbReference type="Rhea" id="RHEA-COMP:9663"/>
        <dbReference type="Rhea" id="RHEA-COMP:9680"/>
        <dbReference type="ChEBI" id="CHEBI:15378"/>
        <dbReference type="ChEBI" id="CHEBI:57501"/>
        <dbReference type="ChEBI" id="CHEBI:57783"/>
        <dbReference type="ChEBI" id="CHEBI:58349"/>
        <dbReference type="ChEBI" id="CHEBI:78442"/>
        <dbReference type="ChEBI" id="CHEBI:78520"/>
        <dbReference type="EC" id="1.2.1.70"/>
    </reaction>
</comment>
<comment type="pathway">
    <text evidence="1">Porphyrin-containing compound metabolism; protoporphyrin-IX biosynthesis; 5-aminolevulinate from L-glutamyl-tRNA(Glu): step 1/2.</text>
</comment>
<comment type="subunit">
    <text evidence="1">Homodimer.</text>
</comment>
<comment type="domain">
    <text evidence="1">Possesses an unusual extended V-shaped dimeric structure with each monomer consisting of three distinct domains arranged along a curved 'spinal' alpha-helix. The N-terminal catalytic domain specifically recognizes the glutamate moiety of the substrate. The second domain is the NADPH-binding domain, and the third C-terminal domain is responsible for dimerization.</text>
</comment>
<comment type="miscellaneous">
    <text evidence="1">During catalysis, the active site Cys acts as a nucleophile attacking the alpha-carbonyl group of tRNA-bound glutamate with the formation of a thioester intermediate between enzyme and glutamate, and the concomitant release of tRNA(Glu). The thioester intermediate is finally reduced by direct hydride transfer from NADPH, to form the product GSA.</text>
</comment>
<comment type="similarity">
    <text evidence="1">Belongs to the glutamyl-tRNA reductase family.</text>
</comment>
<name>HEM1_MYCBP</name>
<keyword id="KW-0521">NADP</keyword>
<keyword id="KW-0560">Oxidoreductase</keyword>
<keyword id="KW-0627">Porphyrin biosynthesis</keyword>
<evidence type="ECO:0000255" key="1">
    <source>
        <dbReference type="HAMAP-Rule" id="MF_00087"/>
    </source>
</evidence>
<evidence type="ECO:0000256" key="2">
    <source>
        <dbReference type="SAM" id="MobiDB-lite"/>
    </source>
</evidence>
<organism>
    <name type="scientific">Mycobacterium bovis (strain BCG / Pasteur 1173P2)</name>
    <dbReference type="NCBI Taxonomy" id="410289"/>
    <lineage>
        <taxon>Bacteria</taxon>
        <taxon>Bacillati</taxon>
        <taxon>Actinomycetota</taxon>
        <taxon>Actinomycetes</taxon>
        <taxon>Mycobacteriales</taxon>
        <taxon>Mycobacteriaceae</taxon>
        <taxon>Mycobacterium</taxon>
        <taxon>Mycobacterium tuberculosis complex</taxon>
    </lineage>
</organism>
<gene>
    <name evidence="1" type="primary">hemA</name>
    <name type="ordered locus">BCG_0552</name>
</gene>
<protein>
    <recommendedName>
        <fullName evidence="1">Glutamyl-tRNA reductase</fullName>
        <shortName evidence="1">GluTR</shortName>
        <ecNumber evidence="1">1.2.1.70</ecNumber>
    </recommendedName>
</protein>
<dbReference type="EC" id="1.2.1.70" evidence="1"/>
<dbReference type="EMBL" id="AM408590">
    <property type="protein sequence ID" value="CAL70537.1"/>
    <property type="molecule type" value="Genomic_DNA"/>
</dbReference>
<dbReference type="RefSeq" id="WP_003402699.1">
    <property type="nucleotide sequence ID" value="NC_008769.1"/>
</dbReference>
<dbReference type="SMR" id="A1KFY5"/>
<dbReference type="KEGG" id="mbb:BCG_0552"/>
<dbReference type="HOGENOM" id="CLU_035113_4_0_11"/>
<dbReference type="UniPathway" id="UPA00251">
    <property type="reaction ID" value="UER00316"/>
</dbReference>
<dbReference type="Proteomes" id="UP000001472">
    <property type="component" value="Chromosome"/>
</dbReference>
<dbReference type="GO" id="GO:0008883">
    <property type="term" value="F:glutamyl-tRNA reductase activity"/>
    <property type="evidence" value="ECO:0007669"/>
    <property type="project" value="UniProtKB-UniRule"/>
</dbReference>
<dbReference type="GO" id="GO:0050661">
    <property type="term" value="F:NADP binding"/>
    <property type="evidence" value="ECO:0007669"/>
    <property type="project" value="InterPro"/>
</dbReference>
<dbReference type="GO" id="GO:0019353">
    <property type="term" value="P:protoporphyrinogen IX biosynthetic process from glutamate"/>
    <property type="evidence" value="ECO:0007669"/>
    <property type="project" value="TreeGrafter"/>
</dbReference>
<dbReference type="CDD" id="cd05213">
    <property type="entry name" value="NAD_bind_Glutamyl_tRNA_reduct"/>
    <property type="match status" value="1"/>
</dbReference>
<dbReference type="FunFam" id="3.30.460.30:FF:000001">
    <property type="entry name" value="Glutamyl-tRNA reductase"/>
    <property type="match status" value="1"/>
</dbReference>
<dbReference type="Gene3D" id="3.30.460.30">
    <property type="entry name" value="Glutamyl-tRNA reductase, N-terminal domain"/>
    <property type="match status" value="1"/>
</dbReference>
<dbReference type="Gene3D" id="3.40.50.720">
    <property type="entry name" value="NAD(P)-binding Rossmann-like Domain"/>
    <property type="match status" value="1"/>
</dbReference>
<dbReference type="HAMAP" id="MF_00087">
    <property type="entry name" value="Glu_tRNA_reductase"/>
    <property type="match status" value="1"/>
</dbReference>
<dbReference type="InterPro" id="IPR000343">
    <property type="entry name" value="4pyrrol_synth_GluRdtase"/>
</dbReference>
<dbReference type="InterPro" id="IPR015896">
    <property type="entry name" value="4pyrrol_synth_GluRdtase_dimer"/>
</dbReference>
<dbReference type="InterPro" id="IPR015895">
    <property type="entry name" value="4pyrrol_synth_GluRdtase_N"/>
</dbReference>
<dbReference type="InterPro" id="IPR018214">
    <property type="entry name" value="GluRdtase_CS"/>
</dbReference>
<dbReference type="InterPro" id="IPR036453">
    <property type="entry name" value="GluRdtase_dimer_dom_sf"/>
</dbReference>
<dbReference type="InterPro" id="IPR036343">
    <property type="entry name" value="GluRdtase_N_sf"/>
</dbReference>
<dbReference type="InterPro" id="IPR036291">
    <property type="entry name" value="NAD(P)-bd_dom_sf"/>
</dbReference>
<dbReference type="InterPro" id="IPR006151">
    <property type="entry name" value="Shikm_DH/Glu-tRNA_Rdtase"/>
</dbReference>
<dbReference type="NCBIfam" id="TIGR01035">
    <property type="entry name" value="hemA"/>
    <property type="match status" value="1"/>
</dbReference>
<dbReference type="NCBIfam" id="NF000744">
    <property type="entry name" value="PRK00045.1-3"/>
    <property type="match status" value="1"/>
</dbReference>
<dbReference type="PANTHER" id="PTHR43013">
    <property type="entry name" value="GLUTAMYL-TRNA REDUCTASE"/>
    <property type="match status" value="1"/>
</dbReference>
<dbReference type="PANTHER" id="PTHR43013:SF1">
    <property type="entry name" value="GLUTAMYL-TRNA REDUCTASE"/>
    <property type="match status" value="1"/>
</dbReference>
<dbReference type="Pfam" id="PF00745">
    <property type="entry name" value="GlutR_dimer"/>
    <property type="match status" value="1"/>
</dbReference>
<dbReference type="Pfam" id="PF05201">
    <property type="entry name" value="GlutR_N"/>
    <property type="match status" value="1"/>
</dbReference>
<dbReference type="Pfam" id="PF01488">
    <property type="entry name" value="Shikimate_DH"/>
    <property type="match status" value="1"/>
</dbReference>
<dbReference type="PIRSF" id="PIRSF000445">
    <property type="entry name" value="4pyrrol_synth_GluRdtase"/>
    <property type="match status" value="1"/>
</dbReference>
<dbReference type="SUPFAM" id="SSF69742">
    <property type="entry name" value="Glutamyl tRNA-reductase catalytic, N-terminal domain"/>
    <property type="match status" value="1"/>
</dbReference>
<dbReference type="SUPFAM" id="SSF69075">
    <property type="entry name" value="Glutamyl tRNA-reductase dimerization domain"/>
    <property type="match status" value="1"/>
</dbReference>
<dbReference type="SUPFAM" id="SSF51735">
    <property type="entry name" value="NAD(P)-binding Rossmann-fold domains"/>
    <property type="match status" value="1"/>
</dbReference>
<dbReference type="PROSITE" id="PS00747">
    <property type="entry name" value="GLUTR"/>
    <property type="match status" value="1"/>
</dbReference>
<accession>A1KFY5</accession>
<sequence length="468" mass="49361">MSVLLFGVSHRSAPVVVLEQLSIDESDQVKIIDRVLASPLVTEAMVLSTCNRVEVYAVVDAFHGGLSVIGQVLAEHSGMSMGELTKYAYVRYSEAAVEHLFAVASGLDSAVIGEQQVLGQVRRAYAVAESNRTVGRVLHELAQRALSVGKRVHSETAIDAAGASVVSVALGMAERKLGSLAGTTAVVIGAGAMGALSAVHLTRAGVGHIQVLNRSLSRAQRLARRIRESGVPAEALALDRLANVLADADVVVSCTGAVRPVVSLADVHHALAAARRDEATRPLVICDLGMPRDVDPAVARLPCVWVVDVDSVQHEPSAHAAAADVEAARHIVAAEVASYLVGQRMAEVTPTVTALRQRAAEVVEAELLRLDNRLPGLQSVQREEVARTVRRVVDKLLHAPTVRIKQLASAPGGDSYAEALRELFELDQTAVDAVATAGELPVVPSGFDAESRRGGGDMQSSPKRSPSN</sequence>
<reference key="1">
    <citation type="journal article" date="2007" name="Proc. Natl. Acad. Sci. U.S.A.">
        <title>Genome plasticity of BCG and impact on vaccine efficacy.</title>
        <authorList>
            <person name="Brosch R."/>
            <person name="Gordon S.V."/>
            <person name="Garnier T."/>
            <person name="Eiglmeier K."/>
            <person name="Frigui W."/>
            <person name="Valenti P."/>
            <person name="Dos Santos S."/>
            <person name="Duthoy S."/>
            <person name="Lacroix C."/>
            <person name="Garcia-Pelayo C."/>
            <person name="Inwald J.K."/>
            <person name="Golby P."/>
            <person name="Garcia J.N."/>
            <person name="Hewinson R.G."/>
            <person name="Behr M.A."/>
            <person name="Quail M.A."/>
            <person name="Churcher C."/>
            <person name="Barrell B.G."/>
            <person name="Parkhill J."/>
            <person name="Cole S.T."/>
        </authorList>
    </citation>
    <scope>NUCLEOTIDE SEQUENCE [LARGE SCALE GENOMIC DNA]</scope>
    <source>
        <strain>BCG / Pasteur 1173P2</strain>
    </source>
</reference>
<proteinExistence type="inferred from homology"/>
<feature type="chain" id="PRO_1000004646" description="Glutamyl-tRNA reductase">
    <location>
        <begin position="1"/>
        <end position="468"/>
    </location>
</feature>
<feature type="region of interest" description="Disordered" evidence="2">
    <location>
        <begin position="443"/>
        <end position="468"/>
    </location>
</feature>
<feature type="compositionally biased region" description="Polar residues" evidence="2">
    <location>
        <begin position="458"/>
        <end position="468"/>
    </location>
</feature>
<feature type="active site" description="Nucleophile" evidence="1">
    <location>
        <position position="50"/>
    </location>
</feature>
<feature type="binding site" evidence="1">
    <location>
        <begin position="49"/>
        <end position="52"/>
    </location>
    <ligand>
        <name>substrate</name>
    </ligand>
</feature>
<feature type="binding site" evidence="1">
    <location>
        <position position="109"/>
    </location>
    <ligand>
        <name>substrate</name>
    </ligand>
</feature>
<feature type="binding site" evidence="1">
    <location>
        <begin position="114"/>
        <end position="116"/>
    </location>
    <ligand>
        <name>substrate</name>
    </ligand>
</feature>
<feature type="binding site" evidence="1">
    <location>
        <position position="120"/>
    </location>
    <ligand>
        <name>substrate</name>
    </ligand>
</feature>
<feature type="binding site" evidence="1">
    <location>
        <begin position="189"/>
        <end position="194"/>
    </location>
    <ligand>
        <name>NADP(+)</name>
        <dbReference type="ChEBI" id="CHEBI:58349"/>
    </ligand>
</feature>
<feature type="site" description="Important for activity" evidence="1">
    <location>
        <position position="99"/>
    </location>
</feature>